<evidence type="ECO:0000255" key="1">
    <source>
        <dbReference type="HAMAP-Rule" id="MF_01217"/>
    </source>
</evidence>
<evidence type="ECO:0000255" key="2">
    <source>
        <dbReference type="PROSITE-ProRule" id="PRU00258"/>
    </source>
</evidence>
<feature type="chain" id="PRO_1000213915" description="Acyl carrier protein">
    <location>
        <begin position="1"/>
        <end position="78"/>
    </location>
</feature>
<feature type="domain" description="Carrier" evidence="2">
    <location>
        <begin position="2"/>
        <end position="77"/>
    </location>
</feature>
<feature type="modified residue" description="O-(pantetheine 4'-phosphoryl)serine" evidence="2">
    <location>
        <position position="37"/>
    </location>
</feature>
<comment type="function">
    <text evidence="1">Carrier of the growing fatty acid chain in fatty acid biosynthesis.</text>
</comment>
<comment type="pathway">
    <text evidence="1">Lipid metabolism; fatty acid biosynthesis.</text>
</comment>
<comment type="subcellular location">
    <subcellularLocation>
        <location evidence="1">Cytoplasm</location>
    </subcellularLocation>
</comment>
<comment type="PTM">
    <text evidence="1">4'-phosphopantetheine is transferred from CoA to a specific serine of apo-ACP by AcpS. This modification is essential for activity because fatty acids are bound in thioester linkage to the sulfhydryl of the prosthetic group.</text>
</comment>
<comment type="similarity">
    <text evidence="1">Belongs to the acyl carrier protein (ACP) family.</text>
</comment>
<dbReference type="EMBL" id="AM181176">
    <property type="protein sequence ID" value="CAY51506.1"/>
    <property type="molecule type" value="Genomic_DNA"/>
</dbReference>
<dbReference type="RefSeq" id="WP_003175607.1">
    <property type="nucleotide sequence ID" value="NC_012660.1"/>
</dbReference>
<dbReference type="SMR" id="C3K0N3"/>
<dbReference type="STRING" id="294.SRM1_04104"/>
<dbReference type="GeneID" id="98112601"/>
<dbReference type="eggNOG" id="COG0236">
    <property type="taxonomic scope" value="Bacteria"/>
</dbReference>
<dbReference type="HOGENOM" id="CLU_108696_5_1_6"/>
<dbReference type="OrthoDB" id="9804551at2"/>
<dbReference type="UniPathway" id="UPA00094"/>
<dbReference type="GO" id="GO:0005829">
    <property type="term" value="C:cytosol"/>
    <property type="evidence" value="ECO:0007669"/>
    <property type="project" value="TreeGrafter"/>
</dbReference>
<dbReference type="GO" id="GO:0016020">
    <property type="term" value="C:membrane"/>
    <property type="evidence" value="ECO:0007669"/>
    <property type="project" value="GOC"/>
</dbReference>
<dbReference type="GO" id="GO:0000035">
    <property type="term" value="F:acyl binding"/>
    <property type="evidence" value="ECO:0007669"/>
    <property type="project" value="TreeGrafter"/>
</dbReference>
<dbReference type="GO" id="GO:0000036">
    <property type="term" value="F:acyl carrier activity"/>
    <property type="evidence" value="ECO:0007669"/>
    <property type="project" value="UniProtKB-UniRule"/>
</dbReference>
<dbReference type="GO" id="GO:0031177">
    <property type="term" value="F:phosphopantetheine binding"/>
    <property type="evidence" value="ECO:0007669"/>
    <property type="project" value="InterPro"/>
</dbReference>
<dbReference type="GO" id="GO:0009245">
    <property type="term" value="P:lipid A biosynthetic process"/>
    <property type="evidence" value="ECO:0007669"/>
    <property type="project" value="TreeGrafter"/>
</dbReference>
<dbReference type="FunFam" id="1.10.1200.10:FF:000001">
    <property type="entry name" value="Acyl carrier protein"/>
    <property type="match status" value="1"/>
</dbReference>
<dbReference type="Gene3D" id="1.10.1200.10">
    <property type="entry name" value="ACP-like"/>
    <property type="match status" value="1"/>
</dbReference>
<dbReference type="HAMAP" id="MF_01217">
    <property type="entry name" value="Acyl_carrier"/>
    <property type="match status" value="1"/>
</dbReference>
<dbReference type="InterPro" id="IPR003231">
    <property type="entry name" value="ACP"/>
</dbReference>
<dbReference type="InterPro" id="IPR036736">
    <property type="entry name" value="ACP-like_sf"/>
</dbReference>
<dbReference type="InterPro" id="IPR020806">
    <property type="entry name" value="PKS_PP-bd"/>
</dbReference>
<dbReference type="InterPro" id="IPR009081">
    <property type="entry name" value="PP-bd_ACP"/>
</dbReference>
<dbReference type="InterPro" id="IPR006162">
    <property type="entry name" value="Ppantetheine_attach_site"/>
</dbReference>
<dbReference type="NCBIfam" id="TIGR00517">
    <property type="entry name" value="acyl_carrier"/>
    <property type="match status" value="1"/>
</dbReference>
<dbReference type="NCBIfam" id="NF002148">
    <property type="entry name" value="PRK00982.1-2"/>
    <property type="match status" value="1"/>
</dbReference>
<dbReference type="NCBIfam" id="NF002149">
    <property type="entry name" value="PRK00982.1-3"/>
    <property type="match status" value="1"/>
</dbReference>
<dbReference type="NCBIfam" id="NF002150">
    <property type="entry name" value="PRK00982.1-4"/>
    <property type="match status" value="1"/>
</dbReference>
<dbReference type="NCBIfam" id="NF002151">
    <property type="entry name" value="PRK00982.1-5"/>
    <property type="match status" value="1"/>
</dbReference>
<dbReference type="PANTHER" id="PTHR20863">
    <property type="entry name" value="ACYL CARRIER PROTEIN"/>
    <property type="match status" value="1"/>
</dbReference>
<dbReference type="PANTHER" id="PTHR20863:SF76">
    <property type="entry name" value="CARRIER DOMAIN-CONTAINING PROTEIN"/>
    <property type="match status" value="1"/>
</dbReference>
<dbReference type="Pfam" id="PF00550">
    <property type="entry name" value="PP-binding"/>
    <property type="match status" value="1"/>
</dbReference>
<dbReference type="SMART" id="SM00823">
    <property type="entry name" value="PKS_PP"/>
    <property type="match status" value="1"/>
</dbReference>
<dbReference type="SUPFAM" id="SSF47336">
    <property type="entry name" value="ACP-like"/>
    <property type="match status" value="1"/>
</dbReference>
<dbReference type="PROSITE" id="PS50075">
    <property type="entry name" value="CARRIER"/>
    <property type="match status" value="1"/>
</dbReference>
<dbReference type="PROSITE" id="PS00012">
    <property type="entry name" value="PHOSPHOPANTETHEINE"/>
    <property type="match status" value="1"/>
</dbReference>
<protein>
    <recommendedName>
        <fullName evidence="1">Acyl carrier protein</fullName>
        <shortName evidence="1">ACP</shortName>
    </recommendedName>
</protein>
<gene>
    <name evidence="1" type="primary">acpP</name>
    <name type="ordered locus">PFLU_4704</name>
</gene>
<sequence>MSTIEERVKKIVAEQLGVKEEEVVNTASFVEDLGADSLDTVELVMALEEEFETEIPDEEAEKITTVQAAIDYVTSHQA</sequence>
<name>ACP_PSEFS</name>
<proteinExistence type="inferred from homology"/>
<keyword id="KW-0963">Cytoplasm</keyword>
<keyword id="KW-0275">Fatty acid biosynthesis</keyword>
<keyword id="KW-0276">Fatty acid metabolism</keyword>
<keyword id="KW-0444">Lipid biosynthesis</keyword>
<keyword id="KW-0443">Lipid metabolism</keyword>
<keyword id="KW-0596">Phosphopantetheine</keyword>
<keyword id="KW-0597">Phosphoprotein</keyword>
<reference key="1">
    <citation type="journal article" date="2009" name="Genome Biol.">
        <title>Genomic and genetic analyses of diversity and plant interactions of Pseudomonas fluorescens.</title>
        <authorList>
            <person name="Silby M.W."/>
            <person name="Cerdeno-Tarraga A.M."/>
            <person name="Vernikos G.S."/>
            <person name="Giddens S.R."/>
            <person name="Jackson R.W."/>
            <person name="Preston G.M."/>
            <person name="Zhang X.-X."/>
            <person name="Moon C.D."/>
            <person name="Gehrig S.M."/>
            <person name="Godfrey S.A.C."/>
            <person name="Knight C.G."/>
            <person name="Malone J.G."/>
            <person name="Robinson Z."/>
            <person name="Spiers A.J."/>
            <person name="Harris S."/>
            <person name="Challis G.L."/>
            <person name="Yaxley A.M."/>
            <person name="Harris D."/>
            <person name="Seeger K."/>
            <person name="Murphy L."/>
            <person name="Rutter S."/>
            <person name="Squares R."/>
            <person name="Quail M.A."/>
            <person name="Saunders E."/>
            <person name="Mavromatis K."/>
            <person name="Brettin T.S."/>
            <person name="Bentley S.D."/>
            <person name="Hothersall J."/>
            <person name="Stephens E."/>
            <person name="Thomas C.M."/>
            <person name="Parkhill J."/>
            <person name="Levy S.B."/>
            <person name="Rainey P.B."/>
            <person name="Thomson N.R."/>
        </authorList>
    </citation>
    <scope>NUCLEOTIDE SEQUENCE [LARGE SCALE GENOMIC DNA]</scope>
    <source>
        <strain>SBW25</strain>
    </source>
</reference>
<organism>
    <name type="scientific">Pseudomonas fluorescens (strain SBW25)</name>
    <dbReference type="NCBI Taxonomy" id="216595"/>
    <lineage>
        <taxon>Bacteria</taxon>
        <taxon>Pseudomonadati</taxon>
        <taxon>Pseudomonadota</taxon>
        <taxon>Gammaproteobacteria</taxon>
        <taxon>Pseudomonadales</taxon>
        <taxon>Pseudomonadaceae</taxon>
        <taxon>Pseudomonas</taxon>
    </lineage>
</organism>
<accession>C3K0N3</accession>